<comment type="function">
    <text evidence="7">Probable water/glycerol channel that may have redundant functions with FgAQP2.</text>
</comment>
<comment type="catalytic activity">
    <reaction evidence="7">
        <text>H2O(in) = H2O(out)</text>
        <dbReference type="Rhea" id="RHEA:29667"/>
        <dbReference type="ChEBI" id="CHEBI:15377"/>
    </reaction>
</comment>
<comment type="catalytic activity">
    <reaction evidence="7">
        <text>glycerol(in) = glycerol(out)</text>
        <dbReference type="Rhea" id="RHEA:29675"/>
        <dbReference type="ChEBI" id="CHEBI:17754"/>
    </reaction>
</comment>
<comment type="subcellular location">
    <subcellularLocation>
        <location evidence="1">Membrane</location>
        <topology evidence="1">Multi-pass membrane protein</topology>
    </subcellularLocation>
</comment>
<comment type="domain">
    <text evidence="7">Aquaporins contain two tandem repeats each containing three membrane-spanning domains and a pore-forming loop with the signature motif Asn-Pro-Ala (NPA).</text>
</comment>
<comment type="disruption phenotype">
    <text evidence="4">Leads to no variable phenotypes.</text>
</comment>
<comment type="similarity">
    <text evidence="6">Belongs to the MIP/aquaporin (TC 1.A.8) family.</text>
</comment>
<reference key="1">
    <citation type="journal article" date="2007" name="Science">
        <title>The Fusarium graminearum genome reveals a link between localized polymorphism and pathogen specialization.</title>
        <authorList>
            <person name="Cuomo C.A."/>
            <person name="Gueldener U."/>
            <person name="Xu J.-R."/>
            <person name="Trail F."/>
            <person name="Turgeon B.G."/>
            <person name="Di Pietro A."/>
            <person name="Walton J.D."/>
            <person name="Ma L.-J."/>
            <person name="Baker S.E."/>
            <person name="Rep M."/>
            <person name="Adam G."/>
            <person name="Antoniw J."/>
            <person name="Baldwin T."/>
            <person name="Calvo S.E."/>
            <person name="Chang Y.-L."/>
            <person name="DeCaprio D."/>
            <person name="Gale L.R."/>
            <person name="Gnerre S."/>
            <person name="Goswami R.S."/>
            <person name="Hammond-Kosack K."/>
            <person name="Harris L.J."/>
            <person name="Hilburn K."/>
            <person name="Kennell J.C."/>
            <person name="Kroken S."/>
            <person name="Magnuson J.K."/>
            <person name="Mannhaupt G."/>
            <person name="Mauceli E.W."/>
            <person name="Mewes H.-W."/>
            <person name="Mitterbauer R."/>
            <person name="Muehlbauer G."/>
            <person name="Muensterkoetter M."/>
            <person name="Nelson D."/>
            <person name="O'Donnell K."/>
            <person name="Ouellet T."/>
            <person name="Qi W."/>
            <person name="Quesneville H."/>
            <person name="Roncero M.I.G."/>
            <person name="Seong K.-Y."/>
            <person name="Tetko I.V."/>
            <person name="Urban M."/>
            <person name="Waalwijk C."/>
            <person name="Ward T.J."/>
            <person name="Yao J."/>
            <person name="Birren B.W."/>
            <person name="Kistler H.C."/>
        </authorList>
    </citation>
    <scope>NUCLEOTIDE SEQUENCE [LARGE SCALE GENOMIC DNA]</scope>
    <source>
        <strain>ATCC MYA-4620 / CBS 123657 / FGSC 9075 / NRRL 31084 / PH-1</strain>
    </source>
</reference>
<reference key="2">
    <citation type="journal article" date="2010" name="Nature">
        <title>Comparative genomics reveals mobile pathogenicity chromosomes in Fusarium.</title>
        <authorList>
            <person name="Ma L.-J."/>
            <person name="van der Does H.C."/>
            <person name="Borkovich K.A."/>
            <person name="Coleman J.J."/>
            <person name="Daboussi M.-J."/>
            <person name="Di Pietro A."/>
            <person name="Dufresne M."/>
            <person name="Freitag M."/>
            <person name="Grabherr M."/>
            <person name="Henrissat B."/>
            <person name="Houterman P.M."/>
            <person name="Kang S."/>
            <person name="Shim W.-B."/>
            <person name="Woloshuk C."/>
            <person name="Xie X."/>
            <person name="Xu J.-R."/>
            <person name="Antoniw J."/>
            <person name="Baker S.E."/>
            <person name="Bluhm B.H."/>
            <person name="Breakspear A."/>
            <person name="Brown D.W."/>
            <person name="Butchko R.A.E."/>
            <person name="Chapman S."/>
            <person name="Coulson R."/>
            <person name="Coutinho P.M."/>
            <person name="Danchin E.G.J."/>
            <person name="Diener A."/>
            <person name="Gale L.R."/>
            <person name="Gardiner D.M."/>
            <person name="Goff S."/>
            <person name="Hammond-Kosack K.E."/>
            <person name="Hilburn K."/>
            <person name="Hua-Van A."/>
            <person name="Jonkers W."/>
            <person name="Kazan K."/>
            <person name="Kodira C.D."/>
            <person name="Koehrsen M."/>
            <person name="Kumar L."/>
            <person name="Lee Y.-H."/>
            <person name="Li L."/>
            <person name="Manners J.M."/>
            <person name="Miranda-Saavedra D."/>
            <person name="Mukherjee M."/>
            <person name="Park G."/>
            <person name="Park J."/>
            <person name="Park S.-Y."/>
            <person name="Proctor R.H."/>
            <person name="Regev A."/>
            <person name="Ruiz-Roldan M.C."/>
            <person name="Sain D."/>
            <person name="Sakthikumar S."/>
            <person name="Sykes S."/>
            <person name="Schwartz D.C."/>
            <person name="Turgeon B.G."/>
            <person name="Wapinski I."/>
            <person name="Yoder O."/>
            <person name="Young S."/>
            <person name="Zeng Q."/>
            <person name="Zhou S."/>
            <person name="Galagan J."/>
            <person name="Cuomo C.A."/>
            <person name="Kistler H.C."/>
            <person name="Rep M."/>
        </authorList>
    </citation>
    <scope>GENOME REANNOTATION</scope>
    <source>
        <strain>ATCC MYA-4620 / CBS 123657 / FGSC 9075 / NRRL 31084 / PH-1</strain>
    </source>
</reference>
<reference key="3">
    <citation type="journal article" date="2015" name="BMC Genomics">
        <title>The completed genome sequence of the pathogenic ascomycete fungus Fusarium graminearum.</title>
        <authorList>
            <person name="King R."/>
            <person name="Urban M."/>
            <person name="Hammond-Kosack M.C.U."/>
            <person name="Hassani-Pak K."/>
            <person name="Hammond-Kosack K.E."/>
        </authorList>
    </citation>
    <scope>NUCLEOTIDE SEQUENCE [LARGE SCALE GENOMIC DNA]</scope>
    <source>
        <strain>ATCC MYA-4620 / CBS 123657 / FGSC 9075 / NRRL 31084 / PH-1</strain>
    </source>
</reference>
<reference key="4">
    <citation type="journal article" date="2018" name="Curr. Genet.">
        <title>Aquaporin1 regulates development, secondary metabolism and stress responses in Fusarium graminearum.</title>
        <authorList>
            <person name="Ding M."/>
            <person name="Li J."/>
            <person name="Fan X."/>
            <person name="He F."/>
            <person name="Yu X."/>
            <person name="Chen L."/>
            <person name="Zou S."/>
            <person name="Liang Y."/>
            <person name="Yu J."/>
        </authorList>
    </citation>
    <scope>IDENTIFICATION</scope>
    <scope>DISRUPTION PHENOTYPE</scope>
    <scope>DOMAIN</scope>
</reference>
<sequence>MAGTQDQSQDYFSKPTTPSTPGQAHLGNVANRIPSTIPDRESGTERAKSTHSRHRVLHGLPSTFMSYMSRRPVASSRGFSRVSSEGTASRPTAPQHSSHFHHYAPAEDGYYQENPWFGEADKKPIFSLGKPLPHKVRRKVLKPVRPDGKVDEEMAIVKEETTNEPHPGYASRTTSGQPYRVETQSSLPSRDIQRQQSRTTAAGVAHNDRRNDAGQPVFEYIPGEATPTPGHRDPASRVQSKQDNGHSPPDFKVDGEPLGHQEKPCVESGDTNANEMRNWWARLRARHPEPLAEFLATAVAIFLGLTGTLSVNLSATQSQPYGTYETSCWAWGFAWMFGIYLGGGVSGAHMNPAISVSLSIFRGFPWRQCVIYVFVQFIASIVAGALAYAMYADSINHVDPDMTKMSMTFFSTPREWVTLKSAFFNQVVGSAIMMIAVFALGDDQNNPPGAGMHALVLGFLVTTLKFTLGYNIGSALNPASDFGPRVIAYAVGFRGDNVFHSGWWFYGPWAATLIGSLLGCTLYDGFVFVGSESPVNFRVDKRVKKLFN</sequence>
<evidence type="ECO:0000255" key="1"/>
<evidence type="ECO:0000255" key="2">
    <source>
        <dbReference type="PROSITE-ProRule" id="PRU00498"/>
    </source>
</evidence>
<evidence type="ECO:0000256" key="3">
    <source>
        <dbReference type="SAM" id="MobiDB-lite"/>
    </source>
</evidence>
<evidence type="ECO:0000269" key="4">
    <source>
    </source>
</evidence>
<evidence type="ECO:0000303" key="5">
    <source>
    </source>
</evidence>
<evidence type="ECO:0000305" key="6"/>
<evidence type="ECO:0000305" key="7">
    <source>
    </source>
</evidence>
<proteinExistence type="inferred from homology"/>
<organism>
    <name type="scientific">Gibberella zeae (strain ATCC MYA-4620 / CBS 123657 / FGSC 9075 / NRRL 31084 / PH-1)</name>
    <name type="common">Wheat head blight fungus</name>
    <name type="synonym">Fusarium graminearum</name>
    <dbReference type="NCBI Taxonomy" id="229533"/>
    <lineage>
        <taxon>Eukaryota</taxon>
        <taxon>Fungi</taxon>
        <taxon>Dikarya</taxon>
        <taxon>Ascomycota</taxon>
        <taxon>Pezizomycotina</taxon>
        <taxon>Sordariomycetes</taxon>
        <taxon>Hypocreomycetidae</taxon>
        <taxon>Hypocreales</taxon>
        <taxon>Nectriaceae</taxon>
        <taxon>Fusarium</taxon>
    </lineage>
</organism>
<feature type="chain" id="PRO_0000457434" description="Probable aquaglyceroporin-4">
    <location>
        <begin position="1"/>
        <end position="548"/>
    </location>
</feature>
<feature type="topological domain" description="Cytoplasmic" evidence="6">
    <location>
        <begin position="1"/>
        <end position="290"/>
    </location>
</feature>
<feature type="transmembrane region" description="Helical" evidence="1">
    <location>
        <begin position="291"/>
        <end position="311"/>
    </location>
</feature>
<feature type="topological domain" description="Extracellular" evidence="6">
    <location>
        <begin position="312"/>
        <end position="327"/>
    </location>
</feature>
<feature type="transmembrane region" description="Helical" evidence="1">
    <location>
        <begin position="328"/>
        <end position="348"/>
    </location>
</feature>
<feature type="topological domain" description="Cytoplasmic" evidence="6">
    <location>
        <begin position="349"/>
        <end position="369"/>
    </location>
</feature>
<feature type="transmembrane region" description="Helical" evidence="1">
    <location>
        <begin position="370"/>
        <end position="390"/>
    </location>
</feature>
<feature type="topological domain" description="Extracellular" evidence="6">
    <location>
        <begin position="391"/>
        <end position="420"/>
    </location>
</feature>
<feature type="transmembrane region" description="Helical" evidence="1">
    <location>
        <begin position="421"/>
        <end position="441"/>
    </location>
</feature>
<feature type="topological domain" description="Cytoplasmic" evidence="6">
    <location>
        <begin position="442"/>
        <end position="448"/>
    </location>
</feature>
<feature type="transmembrane region" description="Helical" evidence="1">
    <location>
        <begin position="449"/>
        <end position="469"/>
    </location>
</feature>
<feature type="topological domain" description="Extracellular" evidence="6">
    <location>
        <begin position="470"/>
        <end position="508"/>
    </location>
</feature>
<feature type="transmembrane region" description="Helical" evidence="1">
    <location>
        <begin position="509"/>
        <end position="529"/>
    </location>
</feature>
<feature type="topological domain" description="Cytoplasmic" evidence="6">
    <location>
        <begin position="530"/>
        <end position="548"/>
    </location>
</feature>
<feature type="region of interest" description="Disordered" evidence="3">
    <location>
        <begin position="1"/>
        <end position="63"/>
    </location>
</feature>
<feature type="region of interest" description="Disordered" evidence="3">
    <location>
        <begin position="76"/>
        <end position="101"/>
    </location>
</feature>
<feature type="region of interest" description="Disordered" evidence="3">
    <location>
        <begin position="158"/>
        <end position="270"/>
    </location>
</feature>
<feature type="short sequence motif" description="NPA 1" evidence="7">
    <location>
        <begin position="351"/>
        <end position="353"/>
    </location>
</feature>
<feature type="short sequence motif" description="NPA 2" evidence="7">
    <location>
        <begin position="477"/>
        <end position="479"/>
    </location>
</feature>
<feature type="compositionally biased region" description="Polar residues" evidence="3">
    <location>
        <begin position="1"/>
        <end position="22"/>
    </location>
</feature>
<feature type="compositionally biased region" description="Basic and acidic residues" evidence="3">
    <location>
        <begin position="38"/>
        <end position="48"/>
    </location>
</feature>
<feature type="compositionally biased region" description="Polar residues" evidence="3">
    <location>
        <begin position="77"/>
        <end position="97"/>
    </location>
</feature>
<feature type="compositionally biased region" description="Polar residues" evidence="3">
    <location>
        <begin position="171"/>
        <end position="200"/>
    </location>
</feature>
<feature type="compositionally biased region" description="Basic and acidic residues" evidence="3">
    <location>
        <begin position="249"/>
        <end position="265"/>
    </location>
</feature>
<feature type="glycosylation site" description="N-linked (GlcNAc...) asparagine" evidence="2">
    <location>
        <position position="312"/>
    </location>
</feature>
<accession>I1RIY3</accession>
<accession>A0A098DJL3</accession>
<gene>
    <name evidence="5" type="primary">FgAQP4</name>
    <name type="ORF">FG03780</name>
    <name type="ORF">FGRAMPH1_01T13689</name>
</gene>
<name>AQP4_GIBZE</name>
<dbReference type="EMBL" id="HG970333">
    <property type="protein sequence ID" value="CEF78647.1"/>
    <property type="molecule type" value="Genomic_DNA"/>
</dbReference>
<dbReference type="RefSeq" id="XP_011321907.1">
    <property type="nucleotide sequence ID" value="XM_011323605.1"/>
</dbReference>
<dbReference type="SMR" id="I1RIY3"/>
<dbReference type="FunCoup" id="I1RIY3">
    <property type="interactions" value="23"/>
</dbReference>
<dbReference type="STRING" id="229533.I1RIY3"/>
<dbReference type="KEGG" id="fgr:FGSG_03780"/>
<dbReference type="VEuPathDB" id="FungiDB:FGRAMPH1_01G13689"/>
<dbReference type="eggNOG" id="KOG0224">
    <property type="taxonomic scope" value="Eukaryota"/>
</dbReference>
<dbReference type="HOGENOM" id="CLU_020019_2_2_1"/>
<dbReference type="InParanoid" id="I1RIY3"/>
<dbReference type="OrthoDB" id="81614at110618"/>
<dbReference type="Proteomes" id="UP000070720">
    <property type="component" value="Chromosome 2"/>
</dbReference>
<dbReference type="GO" id="GO:0005886">
    <property type="term" value="C:plasma membrane"/>
    <property type="evidence" value="ECO:0007669"/>
    <property type="project" value="TreeGrafter"/>
</dbReference>
<dbReference type="GO" id="GO:0015254">
    <property type="term" value="F:glycerol channel activity"/>
    <property type="evidence" value="ECO:0007669"/>
    <property type="project" value="TreeGrafter"/>
</dbReference>
<dbReference type="GO" id="GO:0015250">
    <property type="term" value="F:water channel activity"/>
    <property type="evidence" value="ECO:0007669"/>
    <property type="project" value="TreeGrafter"/>
</dbReference>
<dbReference type="CDD" id="cd00333">
    <property type="entry name" value="MIP"/>
    <property type="match status" value="1"/>
</dbReference>
<dbReference type="Gene3D" id="1.20.1080.10">
    <property type="entry name" value="Glycerol uptake facilitator protein"/>
    <property type="match status" value="1"/>
</dbReference>
<dbReference type="InterPro" id="IPR023271">
    <property type="entry name" value="Aquaporin-like"/>
</dbReference>
<dbReference type="InterPro" id="IPR000425">
    <property type="entry name" value="MIP"/>
</dbReference>
<dbReference type="InterPro" id="IPR050363">
    <property type="entry name" value="MIP/Aquaporin"/>
</dbReference>
<dbReference type="InterPro" id="IPR022357">
    <property type="entry name" value="MIP_CS"/>
</dbReference>
<dbReference type="PANTHER" id="PTHR43829">
    <property type="entry name" value="AQUAPORIN OR AQUAGLYCEROPORIN RELATED"/>
    <property type="match status" value="1"/>
</dbReference>
<dbReference type="PANTHER" id="PTHR43829:SF24">
    <property type="entry name" value="MIP AQUAPORIN (EUROFUNG)"/>
    <property type="match status" value="1"/>
</dbReference>
<dbReference type="Pfam" id="PF00230">
    <property type="entry name" value="MIP"/>
    <property type="match status" value="1"/>
</dbReference>
<dbReference type="PRINTS" id="PR00783">
    <property type="entry name" value="MINTRINSICP"/>
</dbReference>
<dbReference type="SUPFAM" id="SSF81338">
    <property type="entry name" value="Aquaporin-like"/>
    <property type="match status" value="1"/>
</dbReference>
<dbReference type="PROSITE" id="PS00221">
    <property type="entry name" value="MIP"/>
    <property type="match status" value="1"/>
</dbReference>
<keyword id="KW-0325">Glycoprotein</keyword>
<keyword id="KW-0472">Membrane</keyword>
<keyword id="KW-1185">Reference proteome</keyword>
<keyword id="KW-0677">Repeat</keyword>
<keyword id="KW-0812">Transmembrane</keyword>
<keyword id="KW-1133">Transmembrane helix</keyword>
<keyword id="KW-0813">Transport</keyword>
<protein>
    <recommendedName>
        <fullName evidence="5">Probable aquaglyceroporin-4</fullName>
    </recommendedName>
</protein>